<evidence type="ECO:0000255" key="1">
    <source>
        <dbReference type="HAMAP-Rule" id="MF_01356"/>
    </source>
</evidence>
<accession>P0AFD0</accession>
<accession>P33598</accession>
<accession>P78090</accession>
<accession>P78186</accession>
<accession>P78187</accession>
<comment type="function">
    <text evidence="1">NDH-1 shuttles electrons from NADH, via FMN and iron-sulfur (Fe-S) centers, to quinones in the respiratory chain. The immediate electron acceptor for the enzyme in this species is believed to be ubiquinone. Couples the redox reaction to proton translocation (for every two electrons transferred, four hydrogen ions are translocated across the cytoplasmic membrane), and thus conserves the redox energy in a proton gradient.</text>
</comment>
<comment type="catalytic activity">
    <reaction evidence="1">
        <text>a quinone + NADH + 5 H(+)(in) = a quinol + NAD(+) + 4 H(+)(out)</text>
        <dbReference type="Rhea" id="RHEA:57888"/>
        <dbReference type="ChEBI" id="CHEBI:15378"/>
        <dbReference type="ChEBI" id="CHEBI:24646"/>
        <dbReference type="ChEBI" id="CHEBI:57540"/>
        <dbReference type="ChEBI" id="CHEBI:57945"/>
        <dbReference type="ChEBI" id="CHEBI:132124"/>
    </reaction>
</comment>
<comment type="cofactor">
    <cofactor evidence="1">
        <name>[4Fe-4S] cluster</name>
        <dbReference type="ChEBI" id="CHEBI:49883"/>
    </cofactor>
    <text evidence="1">Binds 1 [4Fe-4S] cluster.</text>
</comment>
<comment type="subunit">
    <text evidence="1">NDH-1 is composed of 13 different subunits. Subunits NuoB, CD, E, F, and G constitute the peripheral sector of the complex.</text>
</comment>
<comment type="subcellular location">
    <subcellularLocation>
        <location evidence="1">Cell inner membrane</location>
        <topology evidence="1">Peripheral membrane protein</topology>
        <orientation evidence="1">Cytoplasmic side</orientation>
    </subcellularLocation>
</comment>
<comment type="similarity">
    <text evidence="1">Belongs to the complex I 20 kDa subunit family.</text>
</comment>
<keyword id="KW-0004">4Fe-4S</keyword>
<keyword id="KW-0997">Cell inner membrane</keyword>
<keyword id="KW-1003">Cell membrane</keyword>
<keyword id="KW-0408">Iron</keyword>
<keyword id="KW-0411">Iron-sulfur</keyword>
<keyword id="KW-0472">Membrane</keyword>
<keyword id="KW-0479">Metal-binding</keyword>
<keyword id="KW-0520">NAD</keyword>
<keyword id="KW-0874">Quinone</keyword>
<keyword id="KW-1185">Reference proteome</keyword>
<keyword id="KW-1278">Translocase</keyword>
<keyword id="KW-0813">Transport</keyword>
<keyword id="KW-0830">Ubiquinone</keyword>
<proteinExistence type="inferred from homology"/>
<gene>
    <name evidence="1" type="primary">nuoB</name>
    <name type="ordered locus">SF2363</name>
    <name type="ordered locus">S2498</name>
</gene>
<dbReference type="EC" id="7.1.1.-" evidence="1"/>
<dbReference type="EMBL" id="AE005674">
    <property type="protein sequence ID" value="AAN43876.1"/>
    <property type="molecule type" value="Genomic_DNA"/>
</dbReference>
<dbReference type="EMBL" id="AE014073">
    <property type="protein sequence ID" value="AAP17694.1"/>
    <property type="molecule type" value="Genomic_DNA"/>
</dbReference>
<dbReference type="RefSeq" id="NP_708169.1">
    <property type="nucleotide sequence ID" value="NC_004337.2"/>
</dbReference>
<dbReference type="RefSeq" id="WP_000386733.1">
    <property type="nucleotide sequence ID" value="NZ_WPGW01000084.1"/>
</dbReference>
<dbReference type="SMR" id="P0AFD0"/>
<dbReference type="STRING" id="198214.SF2363"/>
<dbReference type="PaxDb" id="198214-SF2363"/>
<dbReference type="GeneID" id="1027233"/>
<dbReference type="GeneID" id="93774887"/>
<dbReference type="KEGG" id="sfl:SF2363"/>
<dbReference type="KEGG" id="sfx:S2498"/>
<dbReference type="PATRIC" id="fig|198214.7.peg.2829"/>
<dbReference type="HOGENOM" id="CLU_055737_7_3_6"/>
<dbReference type="Proteomes" id="UP000001006">
    <property type="component" value="Chromosome"/>
</dbReference>
<dbReference type="Proteomes" id="UP000002673">
    <property type="component" value="Chromosome"/>
</dbReference>
<dbReference type="GO" id="GO:0005886">
    <property type="term" value="C:plasma membrane"/>
    <property type="evidence" value="ECO:0007669"/>
    <property type="project" value="UniProtKB-SubCell"/>
</dbReference>
<dbReference type="GO" id="GO:0045271">
    <property type="term" value="C:respiratory chain complex I"/>
    <property type="evidence" value="ECO:0007669"/>
    <property type="project" value="TreeGrafter"/>
</dbReference>
<dbReference type="GO" id="GO:0051539">
    <property type="term" value="F:4 iron, 4 sulfur cluster binding"/>
    <property type="evidence" value="ECO:0007669"/>
    <property type="project" value="UniProtKB-KW"/>
</dbReference>
<dbReference type="GO" id="GO:0005506">
    <property type="term" value="F:iron ion binding"/>
    <property type="evidence" value="ECO:0007669"/>
    <property type="project" value="UniProtKB-UniRule"/>
</dbReference>
<dbReference type="GO" id="GO:0008137">
    <property type="term" value="F:NADH dehydrogenase (ubiquinone) activity"/>
    <property type="evidence" value="ECO:0007669"/>
    <property type="project" value="InterPro"/>
</dbReference>
<dbReference type="GO" id="GO:0050136">
    <property type="term" value="F:NADH:ubiquinone reductase (non-electrogenic) activity"/>
    <property type="evidence" value="ECO:0007669"/>
    <property type="project" value="UniProtKB-UniRule"/>
</dbReference>
<dbReference type="GO" id="GO:0048038">
    <property type="term" value="F:quinone binding"/>
    <property type="evidence" value="ECO:0007669"/>
    <property type="project" value="UniProtKB-KW"/>
</dbReference>
<dbReference type="GO" id="GO:0009060">
    <property type="term" value="P:aerobic respiration"/>
    <property type="evidence" value="ECO:0007669"/>
    <property type="project" value="TreeGrafter"/>
</dbReference>
<dbReference type="GO" id="GO:0015990">
    <property type="term" value="P:electron transport coupled proton transport"/>
    <property type="evidence" value="ECO:0007669"/>
    <property type="project" value="TreeGrafter"/>
</dbReference>
<dbReference type="FunFam" id="3.40.50.12280:FF:000002">
    <property type="entry name" value="NADH-quinone oxidoreductase subunit B"/>
    <property type="match status" value="1"/>
</dbReference>
<dbReference type="Gene3D" id="3.40.50.12280">
    <property type="match status" value="1"/>
</dbReference>
<dbReference type="HAMAP" id="MF_01356">
    <property type="entry name" value="NDH1_NuoB"/>
    <property type="match status" value="1"/>
</dbReference>
<dbReference type="InterPro" id="IPR006137">
    <property type="entry name" value="NADH_UbQ_OxRdtase-like_20kDa"/>
</dbReference>
<dbReference type="InterPro" id="IPR006138">
    <property type="entry name" value="NADH_UQ_OxRdtase_20Kd_su"/>
</dbReference>
<dbReference type="NCBIfam" id="TIGR01957">
    <property type="entry name" value="nuoB_fam"/>
    <property type="match status" value="1"/>
</dbReference>
<dbReference type="NCBIfam" id="NF005012">
    <property type="entry name" value="PRK06411.1"/>
    <property type="match status" value="1"/>
</dbReference>
<dbReference type="PANTHER" id="PTHR11995">
    <property type="entry name" value="NADH DEHYDROGENASE"/>
    <property type="match status" value="1"/>
</dbReference>
<dbReference type="PANTHER" id="PTHR11995:SF14">
    <property type="entry name" value="NADH DEHYDROGENASE [UBIQUINONE] IRON-SULFUR PROTEIN 7, MITOCHONDRIAL"/>
    <property type="match status" value="1"/>
</dbReference>
<dbReference type="Pfam" id="PF01058">
    <property type="entry name" value="Oxidored_q6"/>
    <property type="match status" value="1"/>
</dbReference>
<dbReference type="SUPFAM" id="SSF56770">
    <property type="entry name" value="HydA/Nqo6-like"/>
    <property type="match status" value="1"/>
</dbReference>
<dbReference type="PROSITE" id="PS01150">
    <property type="entry name" value="COMPLEX1_20K"/>
    <property type="match status" value="1"/>
</dbReference>
<name>NUOB_SHIFL</name>
<reference key="1">
    <citation type="journal article" date="2002" name="Nucleic Acids Res.">
        <title>Genome sequence of Shigella flexneri 2a: insights into pathogenicity through comparison with genomes of Escherichia coli K12 and O157.</title>
        <authorList>
            <person name="Jin Q."/>
            <person name="Yuan Z."/>
            <person name="Xu J."/>
            <person name="Wang Y."/>
            <person name="Shen Y."/>
            <person name="Lu W."/>
            <person name="Wang J."/>
            <person name="Liu H."/>
            <person name="Yang J."/>
            <person name="Yang F."/>
            <person name="Zhang X."/>
            <person name="Zhang J."/>
            <person name="Yang G."/>
            <person name="Wu H."/>
            <person name="Qu D."/>
            <person name="Dong J."/>
            <person name="Sun L."/>
            <person name="Xue Y."/>
            <person name="Zhao A."/>
            <person name="Gao Y."/>
            <person name="Zhu J."/>
            <person name="Kan B."/>
            <person name="Ding K."/>
            <person name="Chen S."/>
            <person name="Cheng H."/>
            <person name="Yao Z."/>
            <person name="He B."/>
            <person name="Chen R."/>
            <person name="Ma D."/>
            <person name="Qiang B."/>
            <person name="Wen Y."/>
            <person name="Hou Y."/>
            <person name="Yu J."/>
        </authorList>
    </citation>
    <scope>NUCLEOTIDE SEQUENCE [LARGE SCALE GENOMIC DNA]</scope>
    <source>
        <strain>301 / Serotype 2a</strain>
    </source>
</reference>
<reference key="2">
    <citation type="journal article" date="2003" name="Infect. Immun.">
        <title>Complete genome sequence and comparative genomics of Shigella flexneri serotype 2a strain 2457T.</title>
        <authorList>
            <person name="Wei J."/>
            <person name="Goldberg M.B."/>
            <person name="Burland V."/>
            <person name="Venkatesan M.M."/>
            <person name="Deng W."/>
            <person name="Fournier G."/>
            <person name="Mayhew G.F."/>
            <person name="Plunkett G. III"/>
            <person name="Rose D.J."/>
            <person name="Darling A."/>
            <person name="Mau B."/>
            <person name="Perna N.T."/>
            <person name="Payne S.M."/>
            <person name="Runyen-Janecky L.J."/>
            <person name="Zhou S."/>
            <person name="Schwartz D.C."/>
            <person name="Blattner F.R."/>
        </authorList>
    </citation>
    <scope>NUCLEOTIDE SEQUENCE [LARGE SCALE GENOMIC DNA]</scope>
    <source>
        <strain>ATCC 700930 / 2457T / Serotype 2a</strain>
    </source>
</reference>
<sequence length="220" mass="25056">MDYTLTRIDPNGENDRYPLQKQEIVTDPLEQEVNKNVFMGKLNDMVNWGRKNSIWPYNFGLSCCYVEMVTSFTAVHDVARFGAEVLRASPRQADLMVVAGTCFTKMAPVIQRLYDQMLEPKWVISMGACANSGGMYDIYSVVQGVDKFIPVDVYIPGCPPRPEAYMQALMLLQESIGKERRPLSWVVGDQGVYRANMQSERERKRGERIAVTNLRTPDEI</sequence>
<feature type="chain" id="PRO_0000118768" description="NADH-quinone oxidoreductase subunit B">
    <location>
        <begin position="1"/>
        <end position="220"/>
    </location>
</feature>
<feature type="binding site" evidence="1">
    <location>
        <position position="63"/>
    </location>
    <ligand>
        <name>[4Fe-4S] cluster</name>
        <dbReference type="ChEBI" id="CHEBI:49883"/>
    </ligand>
</feature>
<feature type="binding site" evidence="1">
    <location>
        <position position="64"/>
    </location>
    <ligand>
        <name>[4Fe-4S] cluster</name>
        <dbReference type="ChEBI" id="CHEBI:49883"/>
    </ligand>
</feature>
<feature type="binding site" evidence="1">
    <location>
        <position position="129"/>
    </location>
    <ligand>
        <name>[4Fe-4S] cluster</name>
        <dbReference type="ChEBI" id="CHEBI:49883"/>
    </ligand>
</feature>
<feature type="binding site" evidence="1">
    <location>
        <position position="158"/>
    </location>
    <ligand>
        <name>[4Fe-4S] cluster</name>
        <dbReference type="ChEBI" id="CHEBI:49883"/>
    </ligand>
</feature>
<organism>
    <name type="scientific">Shigella flexneri</name>
    <dbReference type="NCBI Taxonomy" id="623"/>
    <lineage>
        <taxon>Bacteria</taxon>
        <taxon>Pseudomonadati</taxon>
        <taxon>Pseudomonadota</taxon>
        <taxon>Gammaproteobacteria</taxon>
        <taxon>Enterobacterales</taxon>
        <taxon>Enterobacteriaceae</taxon>
        <taxon>Shigella</taxon>
    </lineage>
</organism>
<protein>
    <recommendedName>
        <fullName evidence="1">NADH-quinone oxidoreductase subunit B</fullName>
        <ecNumber evidence="1">7.1.1.-</ecNumber>
    </recommendedName>
    <alternativeName>
        <fullName evidence="1">NADH dehydrogenase I subunit B</fullName>
    </alternativeName>
    <alternativeName>
        <fullName evidence="1">NDH-1 subunit B</fullName>
    </alternativeName>
</protein>